<dbReference type="GO" id="GO:0005576">
    <property type="term" value="C:extracellular region"/>
    <property type="evidence" value="ECO:0007669"/>
    <property type="project" value="UniProtKB-SubCell"/>
</dbReference>
<dbReference type="GO" id="GO:0016020">
    <property type="term" value="C:membrane"/>
    <property type="evidence" value="ECO:0007669"/>
    <property type="project" value="UniProtKB-KW"/>
</dbReference>
<dbReference type="GO" id="GO:0042151">
    <property type="term" value="C:nematocyst"/>
    <property type="evidence" value="ECO:0007669"/>
    <property type="project" value="UniProtKB-SubCell"/>
</dbReference>
<dbReference type="GO" id="GO:0044218">
    <property type="term" value="C:other organism cell membrane"/>
    <property type="evidence" value="ECO:0007669"/>
    <property type="project" value="UniProtKB-KW"/>
</dbReference>
<dbReference type="GO" id="GO:0090729">
    <property type="term" value="F:toxin activity"/>
    <property type="evidence" value="ECO:0007669"/>
    <property type="project" value="UniProtKB-KW"/>
</dbReference>
<dbReference type="GO" id="GO:0031640">
    <property type="term" value="P:killing of cells of another organism"/>
    <property type="evidence" value="ECO:0007669"/>
    <property type="project" value="UniProtKB-KW"/>
</dbReference>
<dbReference type="GO" id="GO:0006811">
    <property type="term" value="P:monoatomic ion transport"/>
    <property type="evidence" value="ECO:0007669"/>
    <property type="project" value="UniProtKB-KW"/>
</dbReference>
<sequence length="20" mass="1960">SVAVAGAVIEGATLTFNVLQ</sequence>
<keyword id="KW-0204">Cytolysis</keyword>
<keyword id="KW-0903">Direct protein sequencing</keyword>
<keyword id="KW-0406">Ion transport</keyword>
<keyword id="KW-0472">Membrane</keyword>
<keyword id="KW-0166">Nematocyst</keyword>
<keyword id="KW-0964">Secreted</keyword>
<keyword id="KW-1052">Target cell membrane</keyword>
<keyword id="KW-1053">Target membrane</keyword>
<keyword id="KW-0800">Toxin</keyword>
<keyword id="KW-0812">Transmembrane</keyword>
<keyword id="KW-0813">Transport</keyword>
<feature type="peptide" id="PRO_0000244624" description="Equinatoxin-1''">
    <location>
        <begin position="1"/>
        <end position="20" status="greater than"/>
    </location>
</feature>
<feature type="region of interest" description="Plays an important role in the hemolytic activity" evidence="2">
    <location>
        <begin position="3"/>
        <end position="12"/>
    </location>
</feature>
<feature type="region of interest" description="N-terminal region" evidence="3">
    <location>
        <begin position="11"/>
        <end position="20" status="greater than"/>
    </location>
</feature>
<feature type="non-terminal residue">
    <location>
        <position position="20"/>
    </location>
</feature>
<proteinExistence type="evidence at protein level"/>
<organism>
    <name type="scientific">Actinia equina</name>
    <name type="common">Beadlet anemone</name>
    <dbReference type="NCBI Taxonomy" id="6106"/>
    <lineage>
        <taxon>Eukaryota</taxon>
        <taxon>Metazoa</taxon>
        <taxon>Cnidaria</taxon>
        <taxon>Anthozoa</taxon>
        <taxon>Hexacorallia</taxon>
        <taxon>Actiniaria</taxon>
        <taxon>Actiniidae</taxon>
        <taxon>Actinia</taxon>
    </lineage>
</organism>
<protein>
    <recommendedName>
        <fullName evidence="6">Equinatoxin-1''</fullName>
    </recommendedName>
    <alternativeName>
        <fullName evidence="6">DELTA-actitoxin</fullName>
    </alternativeName>
    <alternativeName>
        <fullName evidence="5">Equinatoxin I''</fullName>
    </alternativeName>
</protein>
<reference key="1">
    <citation type="journal article" date="1999" name="Toxicon">
        <title>Equinatoxins, pore-forming proteins from the sea anemone Actinia equina, belong to a multigene family.</title>
        <authorList>
            <person name="Anderluh G."/>
            <person name="Krizaj I."/>
            <person name="Strukelj B."/>
            <person name="Gubensek F."/>
            <person name="Macek P."/>
            <person name="Pungercar J."/>
        </authorList>
    </citation>
    <scope>PROTEIN SEQUENCE</scope>
</reference>
<reference key="2">
    <citation type="journal article" date="1988" name="Toxicon">
        <title>Isolation and characterization of three lethal and hemolytic toxins from the sea anemone Actinia equina L.</title>
        <authorList>
            <person name="Macek P."/>
            <person name="Lebez D."/>
        </authorList>
    </citation>
    <scope>AMINO-ACID COMPOSITION</scope>
    <scope>TOXIC DOSE</scope>
</reference>
<reference key="3">
    <citation type="journal article" date="2009" name="Toxicon">
        <title>Molecular mechanism of pore formation by actinoporins.</title>
        <authorList>
            <person name="Kristan K.C."/>
            <person name="Viero G."/>
            <person name="Dalla Serra M."/>
            <person name="Macek P."/>
            <person name="Anderluh G."/>
        </authorList>
    </citation>
    <scope>REVIEW</scope>
</reference>
<comment type="function">
    <text evidence="2">Pore-forming protein that forms cations-selective hydrophilic pores of around 1 nm and causes cardiac stimulation and cytolysis. Pore formation is a multi-step process that involves specific recognition of membrane sphingomyelin (but neither cholesterol nor phosphatidylcholine) using aromatic rich region and adjacent phosphocholine (POC) binding site, firm binding to the membrane (mainly driven by hydrophobic interactions) accompanied by the transfer of the N-terminal region to the lipid-water interface and finally pore formation after oligomerization of monomers. Cytolytic effects include red blood cells hemolysis, platelet aggregation and lysis, cytotoxic and cytostatic effects on fibroblasts. Lethality in mammals has been ascribed to severe vasospasm of coronary vessels, cardiac arrhythmia, and inotropic effects.</text>
</comment>
<comment type="subunit">
    <text evidence="1">Octamer or nonamer in membranes. Monomer in the soluble state.</text>
</comment>
<comment type="subcellular location">
    <subcellularLocation>
        <location evidence="1">Secreted</location>
    </subcellularLocation>
    <subcellularLocation>
        <location evidence="2">Nematocyst</location>
    </subcellularLocation>
    <subcellularLocation>
        <location evidence="1">Target cell membrane</location>
    </subcellularLocation>
    <text evidence="1">Forms an alpha-helical membrane channel in the prey.</text>
</comment>
<comment type="domain">
    <text evidence="3">Composed of a long N-terminal alpha-helix and a core region rich in beta-sheet structures. Before the pore formation, the alpha-helix binds the lipid membrane, partitions into the lipid-water interface and stabilizes the monomeric molecule on the membrane. Finally, it traverses the bilayer, thus forming the transmembrane pore.</text>
</comment>
<comment type="toxic dose">
    <text evidence="4">LD(50) is 23 ug/kg by intravenous injection into mice.</text>
</comment>
<comment type="similarity">
    <text evidence="6">Belongs to the actinoporin family. Sea anemone subfamily.</text>
</comment>
<evidence type="ECO:0000250" key="1">
    <source>
        <dbReference type="UniProtKB" id="B9W5G6"/>
    </source>
</evidence>
<evidence type="ECO:0000250" key="2">
    <source>
        <dbReference type="UniProtKB" id="P07845"/>
    </source>
</evidence>
<evidence type="ECO:0000250" key="3">
    <source>
        <dbReference type="UniProtKB" id="P61914"/>
    </source>
</evidence>
<evidence type="ECO:0000269" key="4">
    <source>
    </source>
</evidence>
<evidence type="ECO:0000303" key="5">
    <source>
    </source>
</evidence>
<evidence type="ECO:0000305" key="6"/>
<name>ACTPP_ACTEQ</name>
<accession>P0C1H1</accession>